<reference key="1">
    <citation type="submission" date="1994-07" db="EMBL/GenBank/DDBJ databases">
        <title>Bovine growth hormone receptor cDNA derived from Bos taurus indicus.</title>
        <authorList>
            <person name="Souza S.C."/>
            <person name="Wang X."/>
            <person name="Lobo R.B."/>
            <person name="Kopchick J.J."/>
        </authorList>
    </citation>
    <scope>NUCLEOTIDE SEQUENCE [MRNA]</scope>
    <source>
        <strain>Gir</strain>
        <tissue>Liver</tissue>
    </source>
</reference>
<protein>
    <recommendedName>
        <fullName evidence="6">Growth hormone receptor</fullName>
        <shortName>GH receptor</shortName>
    </recommendedName>
    <alternativeName>
        <fullName>Somatotropin receptor</fullName>
    </alternativeName>
    <component>
        <recommendedName>
            <fullName>Growth hormone-binding protein</fullName>
            <shortName>GH-binding protein</shortName>
            <shortName>GHBP</shortName>
        </recommendedName>
        <alternativeName>
            <fullName>Serum-binding protein</fullName>
        </alternativeName>
    </component>
</protein>
<accession>P79108</accession>
<feature type="signal peptide" evidence="4">
    <location>
        <begin position="1"/>
        <end position="18"/>
    </location>
</feature>
<feature type="chain" id="PRO_0000010949" description="Growth hormone receptor">
    <location>
        <begin position="19"/>
        <end position="634"/>
    </location>
</feature>
<feature type="chain" id="PRO_0000010950" description="Growth hormone-binding protein" evidence="3">
    <location>
        <begin position="19"/>
        <end position="252"/>
    </location>
</feature>
<feature type="topological domain" description="Extracellular" evidence="4">
    <location>
        <begin position="19"/>
        <end position="260"/>
    </location>
</feature>
<feature type="transmembrane region" description="Helical" evidence="4">
    <location>
        <begin position="261"/>
        <end position="284"/>
    </location>
</feature>
<feature type="topological domain" description="Cytoplasmic" evidence="4">
    <location>
        <begin position="285"/>
        <end position="634"/>
    </location>
</feature>
<feature type="domain" description="Fibronectin type-III" evidence="5">
    <location>
        <begin position="147"/>
        <end position="250"/>
    </location>
</feature>
<feature type="region of interest" description="Required for JAK2 binding" evidence="2">
    <location>
        <begin position="290"/>
        <end position="375"/>
    </location>
</feature>
<feature type="short sequence motif" description="WSXWS motif" evidence="1">
    <location>
        <begin position="236"/>
        <end position="240"/>
    </location>
</feature>
<feature type="short sequence motif" description="Box 1 motif" evidence="2">
    <location>
        <begin position="293"/>
        <end position="301"/>
    </location>
</feature>
<feature type="short sequence motif" description="UbE motif" evidence="3">
    <location>
        <begin position="336"/>
        <end position="345"/>
    </location>
</feature>
<feature type="modified residue" description="Phosphoserine" evidence="1">
    <location>
        <position position="337"/>
    </location>
</feature>
<feature type="modified residue" description="Phosphotyrosine" evidence="1">
    <location>
        <position position="483"/>
    </location>
</feature>
<feature type="modified residue" description="Phosphotyrosine" evidence="1">
    <location>
        <position position="591"/>
    </location>
</feature>
<feature type="glycosylation site" description="N-linked (GlcNAc...) asparagine" evidence="4">
    <location>
        <position position="46"/>
    </location>
</feature>
<feature type="glycosylation site" description="N-linked (GlcNAc...) asparagine" evidence="4">
    <location>
        <position position="73"/>
    </location>
</feature>
<feature type="glycosylation site" description="N-linked (GlcNAc...) asparagine" evidence="4">
    <location>
        <position position="111"/>
    </location>
</feature>
<feature type="glycosylation site" description="N-linked (GlcNAc...) asparagine" evidence="4">
    <location>
        <position position="152"/>
    </location>
</feature>
<feature type="glycosylation site" description="N-linked (GlcNAc...) asparagine" evidence="4">
    <location>
        <position position="157"/>
    </location>
</feature>
<feature type="glycosylation site" description="N-linked (GlcNAc...) asparagine" evidence="4">
    <location>
        <position position="196"/>
    </location>
</feature>
<feature type="disulfide bond" evidence="1">
    <location>
        <begin position="56"/>
        <end position="66"/>
    </location>
</feature>
<feature type="disulfide bond" evidence="1">
    <location>
        <begin position="97"/>
        <end position="108"/>
    </location>
</feature>
<feature type="disulfide bond" evidence="1">
    <location>
        <begin position="122"/>
        <end position="136"/>
    </location>
</feature>
<dbReference type="EMBL" id="X70041">
    <property type="protein sequence ID" value="CAA49635.1"/>
    <property type="molecule type" value="mRNA"/>
</dbReference>
<dbReference type="SMR" id="P79108"/>
<dbReference type="GlyCosmos" id="P79108">
    <property type="glycosylation" value="6 sites, No reported glycans"/>
</dbReference>
<dbReference type="GO" id="GO:0009897">
    <property type="term" value="C:external side of plasma membrane"/>
    <property type="evidence" value="ECO:0007669"/>
    <property type="project" value="TreeGrafter"/>
</dbReference>
<dbReference type="GO" id="GO:0005576">
    <property type="term" value="C:extracellular region"/>
    <property type="evidence" value="ECO:0007669"/>
    <property type="project" value="UniProtKB-SubCell"/>
</dbReference>
<dbReference type="GO" id="GO:0004896">
    <property type="term" value="F:cytokine receptor activity"/>
    <property type="evidence" value="ECO:0007669"/>
    <property type="project" value="InterPro"/>
</dbReference>
<dbReference type="GO" id="GO:0006897">
    <property type="term" value="P:endocytosis"/>
    <property type="evidence" value="ECO:0007669"/>
    <property type="project" value="UniProtKB-KW"/>
</dbReference>
<dbReference type="CDD" id="cd00063">
    <property type="entry name" value="FN3"/>
    <property type="match status" value="1"/>
</dbReference>
<dbReference type="FunFam" id="2.60.40.10:FF:000269">
    <property type="entry name" value="Growth hormone receptor"/>
    <property type="match status" value="1"/>
</dbReference>
<dbReference type="FunFam" id="2.60.40.10:FF:000318">
    <property type="entry name" value="Growth hormone receptor"/>
    <property type="match status" value="1"/>
</dbReference>
<dbReference type="Gene3D" id="2.60.40.10">
    <property type="entry name" value="Immunoglobulins"/>
    <property type="match status" value="2"/>
</dbReference>
<dbReference type="InterPro" id="IPR003961">
    <property type="entry name" value="FN3_dom"/>
</dbReference>
<dbReference type="InterPro" id="IPR036116">
    <property type="entry name" value="FN3_sf"/>
</dbReference>
<dbReference type="InterPro" id="IPR025871">
    <property type="entry name" value="GHBP"/>
</dbReference>
<dbReference type="InterPro" id="IPR015152">
    <property type="entry name" value="Growth/epo_recpt_lig-bind"/>
</dbReference>
<dbReference type="InterPro" id="IPR013783">
    <property type="entry name" value="Ig-like_fold"/>
</dbReference>
<dbReference type="InterPro" id="IPR003528">
    <property type="entry name" value="Long_hematopoietin_rcpt_CS"/>
</dbReference>
<dbReference type="PANTHER" id="PTHR23037">
    <property type="entry name" value="CYTOKINE RECEPTOR"/>
    <property type="match status" value="1"/>
</dbReference>
<dbReference type="PANTHER" id="PTHR23037:SF46">
    <property type="entry name" value="INTERLEUKIN 5 RECEPTOR SUBUNIT ALPHA"/>
    <property type="match status" value="1"/>
</dbReference>
<dbReference type="Pfam" id="PF09067">
    <property type="entry name" value="EpoR_lig-bind"/>
    <property type="match status" value="1"/>
</dbReference>
<dbReference type="Pfam" id="PF12772">
    <property type="entry name" value="GHBP"/>
    <property type="match status" value="1"/>
</dbReference>
<dbReference type="SUPFAM" id="SSF49265">
    <property type="entry name" value="Fibronectin type III"/>
    <property type="match status" value="2"/>
</dbReference>
<dbReference type="PROSITE" id="PS50853">
    <property type="entry name" value="FN3"/>
    <property type="match status" value="1"/>
</dbReference>
<dbReference type="PROSITE" id="PS01352">
    <property type="entry name" value="HEMATOPO_REC_L_F1"/>
    <property type="match status" value="1"/>
</dbReference>
<evidence type="ECO:0000250" key="1">
    <source>
        <dbReference type="UniProtKB" id="P10912"/>
    </source>
</evidence>
<evidence type="ECO:0000250" key="2">
    <source>
        <dbReference type="UniProtKB" id="P16310"/>
    </source>
</evidence>
<evidence type="ECO:0000250" key="3">
    <source>
        <dbReference type="UniProtKB" id="P19941"/>
    </source>
</evidence>
<evidence type="ECO:0000255" key="4"/>
<evidence type="ECO:0000255" key="5">
    <source>
        <dbReference type="PROSITE-ProRule" id="PRU00316"/>
    </source>
</evidence>
<evidence type="ECO:0000303" key="6">
    <source ref="1"/>
</evidence>
<evidence type="ECO:0000305" key="7"/>
<name>GHR_BOSIN</name>
<sequence>MDLWQLLLTLAVAGSSDAFSGSEATPAFLVRASQSLQILYPVLETNSSGNPKFTKCRSPELETFSCHWTDGANHSLQSPGSVQMFYIRRDIQEWKECPDYVSAGENSCYFNSSYTSVWTPYCIKLTSNGGIVDHKCFSVEDIVQPDPPVGLNWTLLNISLTEIHADILVKWEPPPNTDVKMGWIILEYELHYKELNETQWKMMDPLMVTSVPMYSLRLDKEYEVRVRTRQRNTEKYGKFSEVLLITFPQMNPSACEEDFQFPWFLIIMFGILGLAVTLFLLIFSKQQRIKMLILPPVPVPKIKGIDPDLLKEGKLEEVNTILAIHDNYKHEFYNDDSWVEFIELDIDDPDEKTEGSDTDRLLSNDHEKSLNIFGAKDDDSGRTSCYEPDILEADFHVSDMCDGTSEVAQPQRLKGEADISCLDQKNQNNSPSNDAAPANQQPSVIHVEENKPRPLLIGGTESTHQAVHHQLSNPSSLANIDFYAQVSDITPAGNVVLSPGQKNKTGNPQCDTHPEVVTSCQANFIVDNAYFCEVDAKKYIALAPHVEAESHVEPSFNQEDIYITTESLTTTAGRSGTAEHVPSSEIPVPDYTSIHIVQSPQGLVLNATALPLPDKEFLSSCGYVSTDQLNKIMP</sequence>
<comment type="function">
    <text evidence="1">Receptor for pituitary gland growth hormone (GH1) involved in regulating postnatal body growth. On ligand binding, couples to the JAK2/STAT5 pathway.</text>
</comment>
<comment type="function">
    <molecule>Growth hormone-binding protein</molecule>
    <text evidence="1">The soluble form (GHBP) acts as a reservoir of growth hormone in plasma and may be a modulator/inhibitor of GH signaling.</text>
</comment>
<comment type="subunit">
    <text evidence="1">On growth hormone (GH) binding, forms homodimers and binds JAK2 via a box 1-containing domain.</text>
</comment>
<comment type="subcellular location">
    <subcellularLocation>
        <location evidence="1">Cell membrane</location>
        <topology evidence="4">Single-pass type I membrane protein</topology>
    </subcellularLocation>
    <text evidence="3">On growth hormone binding, GHR is ubiquitinated, internalized, down-regulated and transported into a degradative or non-degradative pathway.</text>
</comment>
<comment type="subcellular location">
    <molecule>Growth hormone-binding protein</molecule>
    <subcellularLocation>
        <location evidence="1">Secreted</location>
    </subcellularLocation>
    <text evidence="1">Complexed to a substantial fraction of circulating GH.</text>
</comment>
<comment type="domain">
    <text evidence="1">The WSXWS motif appears to be necessary for proper protein folding and thereby efficient intracellular transport and cell-surface receptor binding.</text>
</comment>
<comment type="domain">
    <text evidence="2">The box 1 motif is required for JAK interaction and/or activation.</text>
</comment>
<comment type="domain">
    <text evidence="1">The extracellular domain is the ligand-binding domain representing the growth hormone-binding protein (GHBP).</text>
</comment>
<comment type="domain">
    <text evidence="3">The ubiquitination-dependent endocytosis motif (UbE) is required for recruitment of the ubiquitin conjugation system on to the receptor and for its internalization.</text>
</comment>
<comment type="PTM">
    <text evidence="1 3">The soluble form (GHBP) is produced by phorbol ester-promoted proteolytic cleavage at the cell surface (shedding) by ADAM17/TACE (By similarity). Shedding is inhibited by growth hormone (GH) binding to the receptor probably due to a conformational change in GHR rendering the receptor inaccessible to ADAM17 (By similarity).</text>
</comment>
<comment type="PTM">
    <text evidence="1">On GH binding, phosphorylated on tyrosine residues in the cytoplasmic domain by JAK2.</text>
</comment>
<comment type="PTM">
    <text evidence="1 3">Ubiquitinated by the ECS(SOCS2) complex following ligand-binding and phosphorylation by JAK2, leading to its degradation by the proteasome. Regulation by the ECS(SOCS2) complex acts as a negative feedback loop of growth hormone receptor signaling (By similarity). Ubiquitination is not sufficient for GHR internalization (By similarity).</text>
</comment>
<comment type="similarity">
    <text evidence="7">Belongs to the type I cytokine receptor family. Type 1 subfamily.</text>
</comment>
<organism>
    <name type="scientific">Bos indicus</name>
    <name type="common">Zebu</name>
    <dbReference type="NCBI Taxonomy" id="9915"/>
    <lineage>
        <taxon>Eukaryota</taxon>
        <taxon>Metazoa</taxon>
        <taxon>Chordata</taxon>
        <taxon>Craniata</taxon>
        <taxon>Vertebrata</taxon>
        <taxon>Euteleostomi</taxon>
        <taxon>Mammalia</taxon>
        <taxon>Eutheria</taxon>
        <taxon>Laurasiatheria</taxon>
        <taxon>Artiodactyla</taxon>
        <taxon>Ruminantia</taxon>
        <taxon>Pecora</taxon>
        <taxon>Bovidae</taxon>
        <taxon>Bovinae</taxon>
        <taxon>Bos</taxon>
    </lineage>
</organism>
<gene>
    <name type="primary">GHR</name>
</gene>
<keyword id="KW-1003">Cell membrane</keyword>
<keyword id="KW-1015">Disulfide bond</keyword>
<keyword id="KW-0254">Endocytosis</keyword>
<keyword id="KW-0325">Glycoprotein</keyword>
<keyword id="KW-0472">Membrane</keyword>
<keyword id="KW-0597">Phosphoprotein</keyword>
<keyword id="KW-0675">Receptor</keyword>
<keyword id="KW-0964">Secreted</keyword>
<keyword id="KW-0732">Signal</keyword>
<keyword id="KW-0812">Transmembrane</keyword>
<keyword id="KW-1133">Transmembrane helix</keyword>
<keyword id="KW-0832">Ubl conjugation</keyword>
<proteinExistence type="evidence at transcript level"/>